<proteinExistence type="inferred from homology"/>
<reference key="1">
    <citation type="journal article" date="2001" name="Nature">
        <title>Genome sequence of enterohaemorrhagic Escherichia coli O157:H7.</title>
        <authorList>
            <person name="Perna N.T."/>
            <person name="Plunkett G. III"/>
            <person name="Burland V."/>
            <person name="Mau B."/>
            <person name="Glasner J.D."/>
            <person name="Rose D.J."/>
            <person name="Mayhew G.F."/>
            <person name="Evans P.S."/>
            <person name="Gregor J."/>
            <person name="Kirkpatrick H.A."/>
            <person name="Posfai G."/>
            <person name="Hackett J."/>
            <person name="Klink S."/>
            <person name="Boutin A."/>
            <person name="Shao Y."/>
            <person name="Miller L."/>
            <person name="Grotbeck E.J."/>
            <person name="Davis N.W."/>
            <person name="Lim A."/>
            <person name="Dimalanta E.T."/>
            <person name="Potamousis K."/>
            <person name="Apodaca J."/>
            <person name="Anantharaman T.S."/>
            <person name="Lin J."/>
            <person name="Yen G."/>
            <person name="Schwartz D.C."/>
            <person name="Welch R.A."/>
            <person name="Blattner F.R."/>
        </authorList>
    </citation>
    <scope>NUCLEOTIDE SEQUENCE [LARGE SCALE GENOMIC DNA]</scope>
    <source>
        <strain>O157:H7 / EDL933 / ATCC 700927 / EHEC</strain>
    </source>
</reference>
<reference key="2">
    <citation type="journal article" date="2001" name="DNA Res.">
        <title>Complete genome sequence of enterohemorrhagic Escherichia coli O157:H7 and genomic comparison with a laboratory strain K-12.</title>
        <authorList>
            <person name="Hayashi T."/>
            <person name="Makino K."/>
            <person name="Ohnishi M."/>
            <person name="Kurokawa K."/>
            <person name="Ishii K."/>
            <person name="Yokoyama K."/>
            <person name="Han C.-G."/>
            <person name="Ohtsubo E."/>
            <person name="Nakayama K."/>
            <person name="Murata T."/>
            <person name="Tanaka M."/>
            <person name="Tobe T."/>
            <person name="Iida T."/>
            <person name="Takami H."/>
            <person name="Honda T."/>
            <person name="Sasakawa C."/>
            <person name="Ogasawara N."/>
            <person name="Yasunaga T."/>
            <person name="Kuhara S."/>
            <person name="Shiba T."/>
            <person name="Hattori M."/>
            <person name="Shinagawa H."/>
        </authorList>
    </citation>
    <scope>NUCLEOTIDE SEQUENCE [LARGE SCALE GENOMIC DNA]</scope>
    <source>
        <strain>O157:H7 / Sakai / RIMD 0509952 / EHEC</strain>
    </source>
</reference>
<gene>
    <name evidence="2" type="primary">pyrB</name>
    <name type="ordered locus">Z5856</name>
    <name type="ordered locus">ECs5222</name>
</gene>
<keyword id="KW-0665">Pyrimidine biosynthesis</keyword>
<keyword id="KW-1185">Reference proteome</keyword>
<keyword id="KW-0808">Transferase</keyword>
<comment type="function">
    <text evidence="2">Catalyzes the condensation of carbamoyl phosphate and aspartate to form carbamoyl aspartate and inorganic phosphate, the committed step in the de novo pyrimidine nucleotide biosynthesis pathway.</text>
</comment>
<comment type="catalytic activity">
    <reaction evidence="2">
        <text>carbamoyl phosphate + L-aspartate = N-carbamoyl-L-aspartate + phosphate + H(+)</text>
        <dbReference type="Rhea" id="RHEA:20013"/>
        <dbReference type="ChEBI" id="CHEBI:15378"/>
        <dbReference type="ChEBI" id="CHEBI:29991"/>
        <dbReference type="ChEBI" id="CHEBI:32814"/>
        <dbReference type="ChEBI" id="CHEBI:43474"/>
        <dbReference type="ChEBI" id="CHEBI:58228"/>
        <dbReference type="EC" id="2.1.3.2"/>
    </reaction>
</comment>
<comment type="pathway">
    <text evidence="2">Pyrimidine metabolism; UMP biosynthesis via de novo pathway; (S)-dihydroorotate from bicarbonate: step 2/3.</text>
</comment>
<comment type="subunit">
    <text evidence="2">Heterododecamer (2C3:3R2) of six catalytic PyrB chains organized as two trimers (C3), and six regulatory PyrI chains organized as three dimers (R2).</text>
</comment>
<comment type="similarity">
    <text evidence="2 3">Belongs to the aspartate/ornithine carbamoyltransferase superfamily. ATCase family.</text>
</comment>
<organism>
    <name type="scientific">Escherichia coli O157:H7</name>
    <dbReference type="NCBI Taxonomy" id="83334"/>
    <lineage>
        <taxon>Bacteria</taxon>
        <taxon>Pseudomonadati</taxon>
        <taxon>Pseudomonadota</taxon>
        <taxon>Gammaproteobacteria</taxon>
        <taxon>Enterobacterales</taxon>
        <taxon>Enterobacteriaceae</taxon>
        <taxon>Escherichia</taxon>
    </lineage>
</organism>
<name>PYRB_ECO57</name>
<dbReference type="EC" id="2.1.3.2" evidence="2"/>
<dbReference type="EMBL" id="AE005174">
    <property type="protein sequence ID" value="AAG59443.1"/>
    <property type="molecule type" value="Genomic_DNA"/>
</dbReference>
<dbReference type="EMBL" id="BA000007">
    <property type="protein sequence ID" value="BAB38645.1"/>
    <property type="molecule type" value="Genomic_DNA"/>
</dbReference>
<dbReference type="PIR" id="F91281">
    <property type="entry name" value="F91281"/>
</dbReference>
<dbReference type="RefSeq" id="NP_313249.1">
    <property type="nucleotide sequence ID" value="NC_002695.1"/>
</dbReference>
<dbReference type="RefSeq" id="WP_000013046.1">
    <property type="nucleotide sequence ID" value="NZ_VOAI01000023.1"/>
</dbReference>
<dbReference type="SMR" id="P0A788"/>
<dbReference type="STRING" id="155864.Z5856"/>
<dbReference type="GeneID" id="913842"/>
<dbReference type="GeneID" id="93777579"/>
<dbReference type="KEGG" id="ece:Z5856"/>
<dbReference type="KEGG" id="ecs:ECs_5222"/>
<dbReference type="PATRIC" id="fig|386585.9.peg.5461"/>
<dbReference type="eggNOG" id="COG0540">
    <property type="taxonomic scope" value="Bacteria"/>
</dbReference>
<dbReference type="HOGENOM" id="CLU_043846_1_2_6"/>
<dbReference type="OMA" id="VLIMHPG"/>
<dbReference type="UniPathway" id="UPA00070">
    <property type="reaction ID" value="UER00116"/>
</dbReference>
<dbReference type="Proteomes" id="UP000000558">
    <property type="component" value="Chromosome"/>
</dbReference>
<dbReference type="Proteomes" id="UP000002519">
    <property type="component" value="Chromosome"/>
</dbReference>
<dbReference type="GO" id="GO:0005829">
    <property type="term" value="C:cytosol"/>
    <property type="evidence" value="ECO:0007669"/>
    <property type="project" value="TreeGrafter"/>
</dbReference>
<dbReference type="GO" id="GO:0016597">
    <property type="term" value="F:amino acid binding"/>
    <property type="evidence" value="ECO:0007669"/>
    <property type="project" value="InterPro"/>
</dbReference>
<dbReference type="GO" id="GO:0004070">
    <property type="term" value="F:aspartate carbamoyltransferase activity"/>
    <property type="evidence" value="ECO:0007669"/>
    <property type="project" value="UniProtKB-UniRule"/>
</dbReference>
<dbReference type="GO" id="GO:0006207">
    <property type="term" value="P:'de novo' pyrimidine nucleobase biosynthetic process"/>
    <property type="evidence" value="ECO:0007669"/>
    <property type="project" value="InterPro"/>
</dbReference>
<dbReference type="GO" id="GO:0044205">
    <property type="term" value="P:'de novo' UMP biosynthetic process"/>
    <property type="evidence" value="ECO:0007669"/>
    <property type="project" value="UniProtKB-UniRule"/>
</dbReference>
<dbReference type="GO" id="GO:0006520">
    <property type="term" value="P:amino acid metabolic process"/>
    <property type="evidence" value="ECO:0007669"/>
    <property type="project" value="InterPro"/>
</dbReference>
<dbReference type="FunFam" id="3.40.50.1370:FF:000001">
    <property type="entry name" value="Aspartate carbamoyltransferase"/>
    <property type="match status" value="1"/>
</dbReference>
<dbReference type="FunFam" id="3.40.50.1370:FF:000002">
    <property type="entry name" value="Aspartate carbamoyltransferase 2"/>
    <property type="match status" value="1"/>
</dbReference>
<dbReference type="Gene3D" id="3.40.50.1370">
    <property type="entry name" value="Aspartate/ornithine carbamoyltransferase"/>
    <property type="match status" value="2"/>
</dbReference>
<dbReference type="HAMAP" id="MF_00001">
    <property type="entry name" value="Asp_carb_tr"/>
    <property type="match status" value="1"/>
</dbReference>
<dbReference type="InterPro" id="IPR006132">
    <property type="entry name" value="Asp/Orn_carbamoyltranf_P-bd"/>
</dbReference>
<dbReference type="InterPro" id="IPR006130">
    <property type="entry name" value="Asp/Orn_carbamoylTrfase"/>
</dbReference>
<dbReference type="InterPro" id="IPR036901">
    <property type="entry name" value="Asp/Orn_carbamoylTrfase_sf"/>
</dbReference>
<dbReference type="InterPro" id="IPR002082">
    <property type="entry name" value="Asp_carbamoyltransf"/>
</dbReference>
<dbReference type="InterPro" id="IPR006131">
    <property type="entry name" value="Asp_carbamoyltransf_Asp/Orn-bd"/>
</dbReference>
<dbReference type="NCBIfam" id="TIGR00670">
    <property type="entry name" value="asp_carb_tr"/>
    <property type="match status" value="1"/>
</dbReference>
<dbReference type="NCBIfam" id="NF002032">
    <property type="entry name" value="PRK00856.1"/>
    <property type="match status" value="1"/>
</dbReference>
<dbReference type="PANTHER" id="PTHR45753:SF6">
    <property type="entry name" value="ASPARTATE CARBAMOYLTRANSFERASE"/>
    <property type="match status" value="1"/>
</dbReference>
<dbReference type="PANTHER" id="PTHR45753">
    <property type="entry name" value="ORNITHINE CARBAMOYLTRANSFERASE, MITOCHONDRIAL"/>
    <property type="match status" value="1"/>
</dbReference>
<dbReference type="Pfam" id="PF00185">
    <property type="entry name" value="OTCace"/>
    <property type="match status" value="1"/>
</dbReference>
<dbReference type="Pfam" id="PF02729">
    <property type="entry name" value="OTCace_N"/>
    <property type="match status" value="1"/>
</dbReference>
<dbReference type="PRINTS" id="PR00100">
    <property type="entry name" value="AOTCASE"/>
</dbReference>
<dbReference type="PRINTS" id="PR00101">
    <property type="entry name" value="ATCASE"/>
</dbReference>
<dbReference type="SUPFAM" id="SSF53671">
    <property type="entry name" value="Aspartate/ornithine carbamoyltransferase"/>
    <property type="match status" value="1"/>
</dbReference>
<dbReference type="PROSITE" id="PS00097">
    <property type="entry name" value="CARBAMOYLTRANSFERASE"/>
    <property type="match status" value="1"/>
</dbReference>
<feature type="initiator methionine" description="Removed" evidence="1">
    <location>
        <position position="1"/>
    </location>
</feature>
<feature type="chain" id="PRO_0000113129" description="Aspartate carbamoyltransferase catalytic subunit">
    <location>
        <begin position="2"/>
        <end position="311"/>
    </location>
</feature>
<feature type="binding site" evidence="2">
    <location>
        <position position="55"/>
    </location>
    <ligand>
        <name>carbamoyl phosphate</name>
        <dbReference type="ChEBI" id="CHEBI:58228"/>
    </ligand>
</feature>
<feature type="binding site" evidence="2">
    <location>
        <position position="56"/>
    </location>
    <ligand>
        <name>carbamoyl phosphate</name>
        <dbReference type="ChEBI" id="CHEBI:58228"/>
    </ligand>
</feature>
<feature type="binding site" evidence="2">
    <location>
        <position position="85"/>
    </location>
    <ligand>
        <name>L-aspartate</name>
        <dbReference type="ChEBI" id="CHEBI:29991"/>
    </ligand>
</feature>
<feature type="binding site" evidence="2">
    <location>
        <position position="106"/>
    </location>
    <ligand>
        <name>carbamoyl phosphate</name>
        <dbReference type="ChEBI" id="CHEBI:58228"/>
    </ligand>
</feature>
<feature type="binding site" evidence="2">
    <location>
        <position position="135"/>
    </location>
    <ligand>
        <name>carbamoyl phosphate</name>
        <dbReference type="ChEBI" id="CHEBI:58228"/>
    </ligand>
</feature>
<feature type="binding site" evidence="2">
    <location>
        <position position="138"/>
    </location>
    <ligand>
        <name>carbamoyl phosphate</name>
        <dbReference type="ChEBI" id="CHEBI:58228"/>
    </ligand>
</feature>
<feature type="binding site" evidence="2">
    <location>
        <position position="168"/>
    </location>
    <ligand>
        <name>L-aspartate</name>
        <dbReference type="ChEBI" id="CHEBI:29991"/>
    </ligand>
</feature>
<feature type="binding site" evidence="2">
    <location>
        <position position="230"/>
    </location>
    <ligand>
        <name>L-aspartate</name>
        <dbReference type="ChEBI" id="CHEBI:29991"/>
    </ligand>
</feature>
<feature type="binding site" evidence="2">
    <location>
        <position position="268"/>
    </location>
    <ligand>
        <name>carbamoyl phosphate</name>
        <dbReference type="ChEBI" id="CHEBI:58228"/>
    </ligand>
</feature>
<feature type="binding site" evidence="2">
    <location>
        <position position="269"/>
    </location>
    <ligand>
        <name>carbamoyl phosphate</name>
        <dbReference type="ChEBI" id="CHEBI:58228"/>
    </ligand>
</feature>
<sequence length="311" mass="34427">MANPLYQKHIISINDLSRDDLNLVLATAAKLKANPQPELLKHKVIASCFFEASTRTRLSFETSMHRLGASVVGFSDSANTSLGKKGETLADTISVISTYVDAIVMRHPQEGAARLATEFSGNVPVLNAGDGSNQHPTQTLLDLFTIQETQGRLDNLHVAMVGDLKYGRTVHSLTQALAKFDGNRFYFIAPDALAMPQYILDMLDEKGIAWSLHSSIEEVMAEVDILYMTRVQKERLDPSEYANVKAQFVLRASDLHNAKANMKVLHPLPRVDEIATDVDKTPHAWYFQQAGNGIFARQALLALVLNRDLVL</sequence>
<protein>
    <recommendedName>
        <fullName evidence="2">Aspartate carbamoyltransferase catalytic subunit</fullName>
        <ecNumber evidence="2">2.1.3.2</ecNumber>
    </recommendedName>
    <alternativeName>
        <fullName evidence="2">Aspartate transcarbamylase</fullName>
        <shortName evidence="2">ATCase</shortName>
    </alternativeName>
</protein>
<accession>P0A788</accession>
<accession>P00479</accession>
<accession>Q47555</accession>
<accession>Q47557</accession>
<evidence type="ECO:0000250" key="1"/>
<evidence type="ECO:0000255" key="2">
    <source>
        <dbReference type="HAMAP-Rule" id="MF_00001"/>
    </source>
</evidence>
<evidence type="ECO:0000305" key="3"/>